<protein>
    <recommendedName>
        <fullName evidence="1">PqqA peptide cyclase</fullName>
        <ecNumber evidence="1">1.21.98.4</ecNumber>
    </recommendedName>
    <alternativeName>
        <fullName evidence="1">Coenzyme PQQ synthesis protein E</fullName>
    </alternativeName>
    <alternativeName>
        <fullName evidence="1">Pyrroloquinoline quinone biosynthesis protein E</fullName>
    </alternativeName>
</protein>
<comment type="function">
    <text evidence="1">Catalyzes the cross-linking of a glutamate residue and a tyrosine residue in the PqqA protein as part of the biosynthesis of pyrroloquinoline quinone (PQQ).</text>
</comment>
<comment type="catalytic activity">
    <reaction evidence="1">
        <text>[PQQ precursor protein] + S-adenosyl-L-methionine = E-Y cross-linked-[PQQ precursor protein] + 5'-deoxyadenosine + L-methionine + H(+)</text>
        <dbReference type="Rhea" id="RHEA:56836"/>
        <dbReference type="Rhea" id="RHEA-COMP:14800"/>
        <dbReference type="Rhea" id="RHEA-COMP:14801"/>
        <dbReference type="ChEBI" id="CHEBI:15378"/>
        <dbReference type="ChEBI" id="CHEBI:17319"/>
        <dbReference type="ChEBI" id="CHEBI:57844"/>
        <dbReference type="ChEBI" id="CHEBI:59789"/>
        <dbReference type="ChEBI" id="CHEBI:141026"/>
        <dbReference type="ChEBI" id="CHEBI:141027"/>
        <dbReference type="EC" id="1.21.98.4"/>
    </reaction>
</comment>
<comment type="cofactor">
    <cofactor evidence="1">
        <name>[4Fe-4S] cluster</name>
        <dbReference type="ChEBI" id="CHEBI:49883"/>
    </cofactor>
    <text evidence="1">Binds 1 [4Fe-4S] cluster. The cluster is coordinated with 3 cysteines and an exchangeable S-adenosyl-L-methionine.</text>
</comment>
<comment type="pathway">
    <text evidence="1">Cofactor biosynthesis; pyrroloquinoline quinone biosynthesis.</text>
</comment>
<comment type="subunit">
    <text evidence="1">Interacts with PqqD. The interaction is necessary for activity of PqqE.</text>
</comment>
<comment type="similarity">
    <text evidence="1">Belongs to the radical SAM superfamily. PqqE family.</text>
</comment>
<comment type="sequence caution" evidence="3">
    <conflict type="erroneous initiation">
        <sequence resource="EMBL-CDS" id="BAC52004"/>
    </conflict>
</comment>
<evidence type="ECO:0000255" key="1">
    <source>
        <dbReference type="HAMAP-Rule" id="MF_00660"/>
    </source>
</evidence>
<evidence type="ECO:0000255" key="2">
    <source>
        <dbReference type="PROSITE-ProRule" id="PRU01266"/>
    </source>
</evidence>
<evidence type="ECO:0000305" key="3"/>
<organism>
    <name type="scientific">Bradyrhizobium diazoefficiens (strain JCM 10833 / BCRC 13528 / IAM 13628 / NBRC 14792 / USDA 110)</name>
    <dbReference type="NCBI Taxonomy" id="224911"/>
    <lineage>
        <taxon>Bacteria</taxon>
        <taxon>Pseudomonadati</taxon>
        <taxon>Pseudomonadota</taxon>
        <taxon>Alphaproteobacteria</taxon>
        <taxon>Hyphomicrobiales</taxon>
        <taxon>Nitrobacteraceae</taxon>
        <taxon>Bradyrhizobium</taxon>
    </lineage>
</organism>
<proteinExistence type="inferred from homology"/>
<reference key="1">
    <citation type="journal article" date="2002" name="DNA Res.">
        <title>Complete genomic sequence of nitrogen-fixing symbiotic bacterium Bradyrhizobium japonicum USDA110.</title>
        <authorList>
            <person name="Kaneko T."/>
            <person name="Nakamura Y."/>
            <person name="Sato S."/>
            <person name="Minamisawa K."/>
            <person name="Uchiumi T."/>
            <person name="Sasamoto S."/>
            <person name="Watanabe A."/>
            <person name="Idesawa K."/>
            <person name="Iriguchi M."/>
            <person name="Kawashima K."/>
            <person name="Kohara M."/>
            <person name="Matsumoto M."/>
            <person name="Shimpo S."/>
            <person name="Tsuruoka H."/>
            <person name="Wada T."/>
            <person name="Yamada M."/>
            <person name="Tabata S."/>
        </authorList>
    </citation>
    <scope>NUCLEOTIDE SEQUENCE [LARGE SCALE GENOMIC DNA]</scope>
    <source>
        <strain>JCM 10833 / BCRC 13528 / IAM 13628 / NBRC 14792 / USDA 110</strain>
    </source>
</reference>
<gene>
    <name evidence="1" type="primary">pqqE</name>
    <name type="ordered locus">blr6739</name>
</gene>
<name>PQQE_BRADU</name>
<sequence>MLEKQRSTAETFGIPLAVLLEITHRCPLQCPYCSNPVELDRSGKELTTDEWKKVLSELAEIGVLQVHFSGGEPTARKDLVELVKHASDVGLYTNLITSAVLLTRERLSELADAGLCHVQISFQGVEEGLADRVAGYRNAHRKKLEVAKWTRELDLPLTVNAVMHRQNLHQLPDIIQMSIDLDADRLEVANVQYYGWALKNRAALMPTVAQLDECTRLVEEARERLKGRLSIDYVVPDYYALRPKKCMGGWGRQFFNISPAGKVLPCHAAESITGLDFESVRSNHSIAWIWQNSEAFNRYRGTGWMKEPCKSCEFREIDFGGCRCQAFALTGDAANTDPACALSPLHETIFKQAEREAEGETNRFLYRNFAGGTLEPENDA</sequence>
<keyword id="KW-0004">4Fe-4S</keyword>
<keyword id="KW-0408">Iron</keyword>
<keyword id="KW-0411">Iron-sulfur</keyword>
<keyword id="KW-0479">Metal-binding</keyword>
<keyword id="KW-0560">Oxidoreductase</keyword>
<keyword id="KW-0884">PQQ biosynthesis</keyword>
<keyword id="KW-1185">Reference proteome</keyword>
<keyword id="KW-0949">S-adenosyl-L-methionine</keyword>
<feature type="chain" id="PRO_0000219936" description="PqqA peptide cyclase">
    <location>
        <begin position="1"/>
        <end position="380"/>
    </location>
</feature>
<feature type="domain" description="Radical SAM core" evidence="2">
    <location>
        <begin position="12"/>
        <end position="228"/>
    </location>
</feature>
<feature type="binding site" evidence="1">
    <location>
        <position position="26"/>
    </location>
    <ligand>
        <name>[4Fe-4S] cluster</name>
        <dbReference type="ChEBI" id="CHEBI:49883"/>
        <note>4Fe-4S-S-AdoMet</note>
    </ligand>
</feature>
<feature type="binding site" evidence="1">
    <location>
        <position position="30"/>
    </location>
    <ligand>
        <name>[4Fe-4S] cluster</name>
        <dbReference type="ChEBI" id="CHEBI:49883"/>
        <note>4Fe-4S-S-AdoMet</note>
    </ligand>
</feature>
<feature type="binding site" evidence="1">
    <location>
        <position position="33"/>
    </location>
    <ligand>
        <name>[4Fe-4S] cluster</name>
        <dbReference type="ChEBI" id="CHEBI:49883"/>
        <note>4Fe-4S-S-AdoMet</note>
    </ligand>
</feature>
<accession>Q89FG1</accession>
<dbReference type="EC" id="1.21.98.4" evidence="1"/>
<dbReference type="EMBL" id="BA000040">
    <property type="protein sequence ID" value="BAC52004.1"/>
    <property type="status" value="ALT_INIT"/>
    <property type="molecule type" value="Genomic_DNA"/>
</dbReference>
<dbReference type="RefSeq" id="NP_773379.1">
    <property type="nucleotide sequence ID" value="NC_004463.1"/>
</dbReference>
<dbReference type="RefSeq" id="WP_011089478.1">
    <property type="nucleotide sequence ID" value="NZ_CP011360.1"/>
</dbReference>
<dbReference type="SMR" id="Q89FG1"/>
<dbReference type="STRING" id="224911.AAV28_31290"/>
<dbReference type="EnsemblBacteria" id="BAC52004">
    <property type="protein sequence ID" value="BAC52004"/>
    <property type="gene ID" value="BAC52004"/>
</dbReference>
<dbReference type="GeneID" id="46493713"/>
<dbReference type="KEGG" id="bja:blr6739"/>
<dbReference type="PATRIC" id="fig|224911.5.peg.6904"/>
<dbReference type="eggNOG" id="COG0535">
    <property type="taxonomic scope" value="Bacteria"/>
</dbReference>
<dbReference type="HOGENOM" id="CLU_009273_4_7_5"/>
<dbReference type="InParanoid" id="Q89FG1"/>
<dbReference type="OrthoDB" id="9792276at2"/>
<dbReference type="UniPathway" id="UPA00539"/>
<dbReference type="Proteomes" id="UP000002526">
    <property type="component" value="Chromosome"/>
</dbReference>
<dbReference type="GO" id="GO:0051539">
    <property type="term" value="F:4 iron, 4 sulfur cluster binding"/>
    <property type="evidence" value="ECO:0007669"/>
    <property type="project" value="UniProtKB-KW"/>
</dbReference>
<dbReference type="GO" id="GO:0009975">
    <property type="term" value="F:cyclase activity"/>
    <property type="evidence" value="ECO:0007669"/>
    <property type="project" value="UniProtKB-UniRule"/>
</dbReference>
<dbReference type="GO" id="GO:0005506">
    <property type="term" value="F:iron ion binding"/>
    <property type="evidence" value="ECO:0007669"/>
    <property type="project" value="UniProtKB-UniRule"/>
</dbReference>
<dbReference type="GO" id="GO:0016491">
    <property type="term" value="F:oxidoreductase activity"/>
    <property type="evidence" value="ECO:0007669"/>
    <property type="project" value="UniProtKB-KW"/>
</dbReference>
<dbReference type="GO" id="GO:1904047">
    <property type="term" value="F:S-adenosyl-L-methionine binding"/>
    <property type="evidence" value="ECO:0007669"/>
    <property type="project" value="UniProtKB-UniRule"/>
</dbReference>
<dbReference type="GO" id="GO:0018189">
    <property type="term" value="P:pyrroloquinoline quinone biosynthetic process"/>
    <property type="evidence" value="ECO:0007669"/>
    <property type="project" value="UniProtKB-UniRule"/>
</dbReference>
<dbReference type="CDD" id="cd01335">
    <property type="entry name" value="Radical_SAM"/>
    <property type="match status" value="1"/>
</dbReference>
<dbReference type="CDD" id="cd21119">
    <property type="entry name" value="SPASM_PqqE"/>
    <property type="match status" value="1"/>
</dbReference>
<dbReference type="Gene3D" id="3.20.20.70">
    <property type="entry name" value="Aldolase class I"/>
    <property type="match status" value="1"/>
</dbReference>
<dbReference type="HAMAP" id="MF_00660">
    <property type="entry name" value="PqqE"/>
    <property type="match status" value="1"/>
</dbReference>
<dbReference type="InterPro" id="IPR023885">
    <property type="entry name" value="4Fe4S-binding_SPASM_dom"/>
</dbReference>
<dbReference type="InterPro" id="IPR013785">
    <property type="entry name" value="Aldolase_TIM"/>
</dbReference>
<dbReference type="InterPro" id="IPR006638">
    <property type="entry name" value="Elp3/MiaA/NifB-like_rSAM"/>
</dbReference>
<dbReference type="InterPro" id="IPR000385">
    <property type="entry name" value="MoaA_NifB_PqqE_Fe-S-bd_CS"/>
</dbReference>
<dbReference type="InterPro" id="IPR011843">
    <property type="entry name" value="PQQ_synth_PqqE_bac"/>
</dbReference>
<dbReference type="InterPro" id="IPR017200">
    <property type="entry name" value="PqqE-like"/>
</dbReference>
<dbReference type="InterPro" id="IPR050377">
    <property type="entry name" value="Radical_SAM_PqqE_MftC-like"/>
</dbReference>
<dbReference type="InterPro" id="IPR007197">
    <property type="entry name" value="rSAM"/>
</dbReference>
<dbReference type="NCBIfam" id="TIGR02109">
    <property type="entry name" value="PQQ_syn_pqqE"/>
    <property type="match status" value="1"/>
</dbReference>
<dbReference type="NCBIfam" id="TIGR04085">
    <property type="entry name" value="rSAM_more_4Fe4S"/>
    <property type="match status" value="1"/>
</dbReference>
<dbReference type="PANTHER" id="PTHR11228:SF7">
    <property type="entry name" value="PQQA PEPTIDE CYCLASE"/>
    <property type="match status" value="1"/>
</dbReference>
<dbReference type="PANTHER" id="PTHR11228">
    <property type="entry name" value="RADICAL SAM DOMAIN PROTEIN"/>
    <property type="match status" value="1"/>
</dbReference>
<dbReference type="Pfam" id="PF13353">
    <property type="entry name" value="Fer4_12"/>
    <property type="match status" value="1"/>
</dbReference>
<dbReference type="Pfam" id="PF04055">
    <property type="entry name" value="Radical_SAM"/>
    <property type="match status" value="1"/>
</dbReference>
<dbReference type="Pfam" id="PF13186">
    <property type="entry name" value="SPASM"/>
    <property type="match status" value="1"/>
</dbReference>
<dbReference type="PIRSF" id="PIRSF037420">
    <property type="entry name" value="PQQ_syn_pqqE"/>
    <property type="match status" value="1"/>
</dbReference>
<dbReference type="SFLD" id="SFLDF00280">
    <property type="entry name" value="coenzyme_PQQ_synthesis_protein"/>
    <property type="match status" value="1"/>
</dbReference>
<dbReference type="SFLD" id="SFLDG01067">
    <property type="entry name" value="SPASM/twitch_domain_containing"/>
    <property type="match status" value="1"/>
</dbReference>
<dbReference type="SMART" id="SM00729">
    <property type="entry name" value="Elp3"/>
    <property type="match status" value="1"/>
</dbReference>
<dbReference type="SUPFAM" id="SSF102114">
    <property type="entry name" value="Radical SAM enzymes"/>
    <property type="match status" value="1"/>
</dbReference>
<dbReference type="PROSITE" id="PS01305">
    <property type="entry name" value="MOAA_NIFB_PQQE"/>
    <property type="match status" value="1"/>
</dbReference>
<dbReference type="PROSITE" id="PS51918">
    <property type="entry name" value="RADICAL_SAM"/>
    <property type="match status" value="1"/>
</dbReference>